<evidence type="ECO:0000255" key="1">
    <source>
        <dbReference type="PROSITE-ProRule" id="PRU00541"/>
    </source>
</evidence>
<evidence type="ECO:0000255" key="2">
    <source>
        <dbReference type="PROSITE-ProRule" id="PRU00542"/>
    </source>
</evidence>
<evidence type="ECO:0000256" key="3">
    <source>
        <dbReference type="SAM" id="MobiDB-lite"/>
    </source>
</evidence>
<evidence type="ECO:0000305" key="4"/>
<protein>
    <recommendedName>
        <fullName>Probable ATP-dependent RNA helicase MG425 homolog</fullName>
        <ecNumber>3.6.4.13</ecNumber>
    </recommendedName>
</protein>
<proteinExistence type="inferred from homology"/>
<dbReference type="EC" id="3.6.4.13"/>
<dbReference type="EMBL" id="U00089">
    <property type="protein sequence ID" value="AAB95867.1"/>
    <property type="molecule type" value="Genomic_DNA"/>
</dbReference>
<dbReference type="PIR" id="S73545">
    <property type="entry name" value="S73545"/>
</dbReference>
<dbReference type="RefSeq" id="NP_110312.1">
    <property type="nucleotide sequence ID" value="NC_000912.1"/>
</dbReference>
<dbReference type="RefSeq" id="WP_010874980.1">
    <property type="nucleotide sequence ID" value="NC_000912.1"/>
</dbReference>
<dbReference type="SMR" id="P75172"/>
<dbReference type="IntAct" id="P75172">
    <property type="interactions" value="3"/>
</dbReference>
<dbReference type="STRING" id="272634.MPN_623"/>
<dbReference type="EnsemblBacteria" id="AAB95867">
    <property type="protein sequence ID" value="AAB95867"/>
    <property type="gene ID" value="MPN_623"/>
</dbReference>
<dbReference type="KEGG" id="mpn:MPN_623"/>
<dbReference type="PATRIC" id="fig|272634.6.peg.687"/>
<dbReference type="HOGENOM" id="CLU_003041_1_3_14"/>
<dbReference type="OrthoDB" id="9805696at2"/>
<dbReference type="BioCyc" id="MPNE272634:G1GJ3-1003-MONOMER"/>
<dbReference type="Proteomes" id="UP000000808">
    <property type="component" value="Chromosome"/>
</dbReference>
<dbReference type="GO" id="GO:0005829">
    <property type="term" value="C:cytosol"/>
    <property type="evidence" value="ECO:0007669"/>
    <property type="project" value="TreeGrafter"/>
</dbReference>
<dbReference type="GO" id="GO:0005524">
    <property type="term" value="F:ATP binding"/>
    <property type="evidence" value="ECO:0007669"/>
    <property type="project" value="UniProtKB-KW"/>
</dbReference>
<dbReference type="GO" id="GO:0016887">
    <property type="term" value="F:ATP hydrolysis activity"/>
    <property type="evidence" value="ECO:0007669"/>
    <property type="project" value="RHEA"/>
</dbReference>
<dbReference type="GO" id="GO:0003723">
    <property type="term" value="F:RNA binding"/>
    <property type="evidence" value="ECO:0007669"/>
    <property type="project" value="UniProtKB-KW"/>
</dbReference>
<dbReference type="GO" id="GO:0003724">
    <property type="term" value="F:RNA helicase activity"/>
    <property type="evidence" value="ECO:0007669"/>
    <property type="project" value="UniProtKB-EC"/>
</dbReference>
<dbReference type="CDD" id="cd00268">
    <property type="entry name" value="DEADc"/>
    <property type="match status" value="1"/>
</dbReference>
<dbReference type="CDD" id="cd18787">
    <property type="entry name" value="SF2_C_DEAD"/>
    <property type="match status" value="1"/>
</dbReference>
<dbReference type="Gene3D" id="3.40.50.300">
    <property type="entry name" value="P-loop containing nucleotide triphosphate hydrolases"/>
    <property type="match status" value="2"/>
</dbReference>
<dbReference type="InterPro" id="IPR011545">
    <property type="entry name" value="DEAD/DEAH_box_helicase_dom"/>
</dbReference>
<dbReference type="InterPro" id="IPR050079">
    <property type="entry name" value="DEAD_box_RNA_helicase"/>
</dbReference>
<dbReference type="InterPro" id="IPR014001">
    <property type="entry name" value="Helicase_ATP-bd"/>
</dbReference>
<dbReference type="InterPro" id="IPR001650">
    <property type="entry name" value="Helicase_C-like"/>
</dbReference>
<dbReference type="InterPro" id="IPR027417">
    <property type="entry name" value="P-loop_NTPase"/>
</dbReference>
<dbReference type="InterPro" id="IPR014014">
    <property type="entry name" value="RNA_helicase_DEAD_Q_motif"/>
</dbReference>
<dbReference type="PANTHER" id="PTHR47959:SF1">
    <property type="entry name" value="ATP-DEPENDENT RNA HELICASE DBPA"/>
    <property type="match status" value="1"/>
</dbReference>
<dbReference type="PANTHER" id="PTHR47959">
    <property type="entry name" value="ATP-DEPENDENT RNA HELICASE RHLE-RELATED"/>
    <property type="match status" value="1"/>
</dbReference>
<dbReference type="Pfam" id="PF00270">
    <property type="entry name" value="DEAD"/>
    <property type="match status" value="1"/>
</dbReference>
<dbReference type="Pfam" id="PF00271">
    <property type="entry name" value="Helicase_C"/>
    <property type="match status" value="1"/>
</dbReference>
<dbReference type="SMART" id="SM00487">
    <property type="entry name" value="DEXDc"/>
    <property type="match status" value="1"/>
</dbReference>
<dbReference type="SMART" id="SM00490">
    <property type="entry name" value="HELICc"/>
    <property type="match status" value="1"/>
</dbReference>
<dbReference type="SUPFAM" id="SSF52540">
    <property type="entry name" value="P-loop containing nucleoside triphosphate hydrolases"/>
    <property type="match status" value="1"/>
</dbReference>
<dbReference type="PROSITE" id="PS51192">
    <property type="entry name" value="HELICASE_ATP_BIND_1"/>
    <property type="match status" value="1"/>
</dbReference>
<dbReference type="PROSITE" id="PS51194">
    <property type="entry name" value="HELICASE_CTER"/>
    <property type="match status" value="1"/>
</dbReference>
<dbReference type="PROSITE" id="PS51195">
    <property type="entry name" value="Q_MOTIF"/>
    <property type="match status" value="1"/>
</dbReference>
<keyword id="KW-0067">ATP-binding</keyword>
<keyword id="KW-0347">Helicase</keyword>
<keyword id="KW-0378">Hydrolase</keyword>
<keyword id="KW-0547">Nucleotide-binding</keyword>
<keyword id="KW-1185">Reference proteome</keyword>
<keyword id="KW-0694">RNA-binding</keyword>
<feature type="chain" id="PRO_0000055115" description="Probable ATP-dependent RNA helicase MG425 homolog">
    <location>
        <begin position="1"/>
        <end position="450"/>
    </location>
</feature>
<feature type="domain" description="Helicase ATP-binding" evidence="1">
    <location>
        <begin position="34"/>
        <end position="206"/>
    </location>
</feature>
<feature type="domain" description="Helicase C-terminal" evidence="2">
    <location>
        <begin position="234"/>
        <end position="384"/>
    </location>
</feature>
<feature type="region of interest" description="Disordered" evidence="3">
    <location>
        <begin position="429"/>
        <end position="450"/>
    </location>
</feature>
<feature type="short sequence motif" description="Q motif">
    <location>
        <begin position="3"/>
        <end position="31"/>
    </location>
</feature>
<feature type="short sequence motif" description="DEVD box">
    <location>
        <begin position="154"/>
        <end position="157"/>
    </location>
</feature>
<feature type="compositionally biased region" description="Basic and acidic residues" evidence="3">
    <location>
        <begin position="430"/>
        <end position="450"/>
    </location>
</feature>
<feature type="binding site" evidence="1">
    <location>
        <begin position="47"/>
        <end position="54"/>
    </location>
    <ligand>
        <name>ATP</name>
        <dbReference type="ChEBI" id="CHEBI:30616"/>
    </ligand>
</feature>
<reference key="1">
    <citation type="journal article" date="1996" name="Nucleic Acids Res.">
        <title>Complete sequence analysis of the genome of the bacterium Mycoplasma pneumoniae.</title>
        <authorList>
            <person name="Himmelreich R."/>
            <person name="Hilbert H."/>
            <person name="Plagens H."/>
            <person name="Pirkl E."/>
            <person name="Li B.-C."/>
            <person name="Herrmann R."/>
        </authorList>
    </citation>
    <scope>NUCLEOTIDE SEQUENCE [LARGE SCALE GENOMIC DNA]</scope>
    <source>
        <strain>ATCC 29342 / M129 / Subtype 1</strain>
    </source>
</reference>
<sequence length="450" mass="51245">MDSTFNELGVSPALIATLKDNNINQPTTIQQLAIPQFLQHQNLIVHSPTGTGKTAVFGIPVIETLLKKPSKGTTQTLVVAPTRELAEQIKTTFINFAKHTHLKVVSLIGGIPIWQQLKQLENQPEIVVGTMGRVMDLLERGVIKFEHLEHLIIDEVDLMLDRGFKRKLFDLLSRIEKFEQIAVYSASYNEETIETAKQITKNGIFLAAPELKQNAPEPDNKLIDQFVCYLFSNRKKQALYSLVSQTRAKSIIVFCDTKKLVDELCIFLRKNDVKTYPLHGDKAQFIRERNLKLFANTTAPIVLVTTDLIGRGIHVEGVDMVVNYSACVNFETYLHRMGRTGRNNHKGSCITFCTSHEKQAFLKLLEQVNDKRISPLRPMRLRLIPLKCKTQPKKGKLSLQSVQKIYVNPRSNGTFKRVPLAGDLFKSRMRQPERDMQKNKLHDSDWQSNM</sequence>
<comment type="catalytic activity">
    <reaction>
        <text>ATP + H2O = ADP + phosphate + H(+)</text>
        <dbReference type="Rhea" id="RHEA:13065"/>
        <dbReference type="ChEBI" id="CHEBI:15377"/>
        <dbReference type="ChEBI" id="CHEBI:15378"/>
        <dbReference type="ChEBI" id="CHEBI:30616"/>
        <dbReference type="ChEBI" id="CHEBI:43474"/>
        <dbReference type="ChEBI" id="CHEBI:456216"/>
        <dbReference type="EC" id="3.6.4.13"/>
    </reaction>
</comment>
<comment type="similarity">
    <text evidence="4">Belongs to the DEAD box helicase family.</text>
</comment>
<accession>P75172</accession>
<organism>
    <name type="scientific">Mycoplasma pneumoniae (strain ATCC 29342 / M129 / Subtype 1)</name>
    <name type="common">Mycoplasmoides pneumoniae</name>
    <dbReference type="NCBI Taxonomy" id="272634"/>
    <lineage>
        <taxon>Bacteria</taxon>
        <taxon>Bacillati</taxon>
        <taxon>Mycoplasmatota</taxon>
        <taxon>Mycoplasmoidales</taxon>
        <taxon>Mycoplasmoidaceae</taxon>
        <taxon>Mycoplasmoides</taxon>
    </lineage>
</organism>
<name>Y623_MYCPN</name>
<gene>
    <name type="ordered locus">MPN_623</name>
    <name type="ORF">C12_orf450</name>
    <name type="ORF">MP219</name>
</gene>